<organism>
    <name type="scientific">Salmonella agona (strain SL483)</name>
    <dbReference type="NCBI Taxonomy" id="454166"/>
    <lineage>
        <taxon>Bacteria</taxon>
        <taxon>Pseudomonadati</taxon>
        <taxon>Pseudomonadota</taxon>
        <taxon>Gammaproteobacteria</taxon>
        <taxon>Enterobacterales</taxon>
        <taxon>Enterobacteriaceae</taxon>
        <taxon>Salmonella</taxon>
    </lineage>
</organism>
<protein>
    <recommendedName>
        <fullName evidence="1">Der GTPase-activating protein YihI</fullName>
    </recommendedName>
</protein>
<gene>
    <name evidence="1" type="primary">yihI</name>
    <name type="ordered locus">SeAg_B4235</name>
</gene>
<accession>B5EZX4</accession>
<proteinExistence type="inferred from homology"/>
<reference key="1">
    <citation type="journal article" date="2011" name="J. Bacteriol.">
        <title>Comparative genomics of 28 Salmonella enterica isolates: evidence for CRISPR-mediated adaptive sublineage evolution.</title>
        <authorList>
            <person name="Fricke W.F."/>
            <person name="Mammel M.K."/>
            <person name="McDermott P.F."/>
            <person name="Tartera C."/>
            <person name="White D.G."/>
            <person name="Leclerc J.E."/>
            <person name="Ravel J."/>
            <person name="Cebula T.A."/>
        </authorList>
    </citation>
    <scope>NUCLEOTIDE SEQUENCE [LARGE SCALE GENOMIC DNA]</scope>
    <source>
        <strain>SL483</strain>
    </source>
</reference>
<sequence length="171" mass="19213">MKKPTSAPRSKAFGKQRRKTREELNQEARDRKRLKKHRGHAPGSRAAGGNSASGGGNQNQQKDPRIGSKTPVPLGVTEKVTQQHKPKSEKPMLSPQAELDLLETDERLDALLERLEAGETLSAEDQAWVDAKLDRIDELMQKLGLSYDDDEEDDEEDEKQEDMMRLLRGGN</sequence>
<keyword id="KW-0343">GTPase activation</keyword>
<keyword id="KW-0690">Ribosome biogenesis</keyword>
<comment type="function">
    <text evidence="1">A GTPase-activating protein (GAP) that modifies Der/EngA GTPase function. May play a role in ribosome biogenesis.</text>
</comment>
<comment type="subunit">
    <text evidence="1">Interacts with Der.</text>
</comment>
<comment type="similarity">
    <text evidence="1">Belongs to the YihI family.</text>
</comment>
<evidence type="ECO:0000255" key="1">
    <source>
        <dbReference type="HAMAP-Rule" id="MF_01058"/>
    </source>
</evidence>
<evidence type="ECO:0000256" key="2">
    <source>
        <dbReference type="SAM" id="MobiDB-lite"/>
    </source>
</evidence>
<feature type="chain" id="PRO_1000136388" description="Der GTPase-activating protein YihI">
    <location>
        <begin position="1"/>
        <end position="171"/>
    </location>
</feature>
<feature type="region of interest" description="Disordered" evidence="2">
    <location>
        <begin position="1"/>
        <end position="99"/>
    </location>
</feature>
<feature type="region of interest" description="Disordered" evidence="2">
    <location>
        <begin position="145"/>
        <end position="171"/>
    </location>
</feature>
<feature type="compositionally biased region" description="Basic and acidic residues" evidence="2">
    <location>
        <begin position="20"/>
        <end position="30"/>
    </location>
</feature>
<feature type="compositionally biased region" description="Basic residues" evidence="2">
    <location>
        <begin position="31"/>
        <end position="40"/>
    </location>
</feature>
<feature type="compositionally biased region" description="Acidic residues" evidence="2">
    <location>
        <begin position="147"/>
        <end position="160"/>
    </location>
</feature>
<name>YIHI_SALA4</name>
<dbReference type="EMBL" id="CP001138">
    <property type="protein sequence ID" value="ACH49648.1"/>
    <property type="molecule type" value="Genomic_DNA"/>
</dbReference>
<dbReference type="RefSeq" id="WP_000743292.1">
    <property type="nucleotide sequence ID" value="NC_011149.1"/>
</dbReference>
<dbReference type="SMR" id="B5EZX4"/>
<dbReference type="KEGG" id="sea:SeAg_B4235"/>
<dbReference type="HOGENOM" id="CLU_094104_2_0_6"/>
<dbReference type="Proteomes" id="UP000008819">
    <property type="component" value="Chromosome"/>
</dbReference>
<dbReference type="GO" id="GO:0005096">
    <property type="term" value="F:GTPase activator activity"/>
    <property type="evidence" value="ECO:0007669"/>
    <property type="project" value="UniProtKB-KW"/>
</dbReference>
<dbReference type="GO" id="GO:0042254">
    <property type="term" value="P:ribosome biogenesis"/>
    <property type="evidence" value="ECO:0007669"/>
    <property type="project" value="UniProtKB-KW"/>
</dbReference>
<dbReference type="HAMAP" id="MF_01058">
    <property type="entry name" value="GAP_YihI"/>
    <property type="match status" value="1"/>
</dbReference>
<dbReference type="InterPro" id="IPR007336">
    <property type="entry name" value="YihI"/>
</dbReference>
<dbReference type="NCBIfam" id="NF003560">
    <property type="entry name" value="PRK05244.1-1"/>
    <property type="match status" value="1"/>
</dbReference>
<dbReference type="Pfam" id="PF04220">
    <property type="entry name" value="YihI"/>
    <property type="match status" value="1"/>
</dbReference>